<dbReference type="EC" id="4.1.1.65" evidence="1"/>
<dbReference type="EMBL" id="BX640445">
    <property type="protein sequence ID" value="CAE33386.1"/>
    <property type="molecule type" value="Genomic_DNA"/>
</dbReference>
<dbReference type="SMR" id="Q7WIF7"/>
<dbReference type="KEGG" id="bbr:BB2894"/>
<dbReference type="eggNOG" id="COG0688">
    <property type="taxonomic scope" value="Bacteria"/>
</dbReference>
<dbReference type="HOGENOM" id="CLU_029061_4_1_4"/>
<dbReference type="UniPathway" id="UPA00558">
    <property type="reaction ID" value="UER00616"/>
</dbReference>
<dbReference type="Proteomes" id="UP000001027">
    <property type="component" value="Chromosome"/>
</dbReference>
<dbReference type="GO" id="GO:0005886">
    <property type="term" value="C:plasma membrane"/>
    <property type="evidence" value="ECO:0007669"/>
    <property type="project" value="UniProtKB-SubCell"/>
</dbReference>
<dbReference type="GO" id="GO:0004609">
    <property type="term" value="F:phosphatidylserine decarboxylase activity"/>
    <property type="evidence" value="ECO:0007669"/>
    <property type="project" value="UniProtKB-UniRule"/>
</dbReference>
<dbReference type="GO" id="GO:0006646">
    <property type="term" value="P:phosphatidylethanolamine biosynthetic process"/>
    <property type="evidence" value="ECO:0007669"/>
    <property type="project" value="UniProtKB-UniRule"/>
</dbReference>
<dbReference type="HAMAP" id="MF_00662">
    <property type="entry name" value="PS_decarb_PSD_B_type1"/>
    <property type="match status" value="1"/>
</dbReference>
<dbReference type="InterPro" id="IPR003817">
    <property type="entry name" value="PS_Dcarbxylase"/>
</dbReference>
<dbReference type="InterPro" id="IPR033177">
    <property type="entry name" value="PSD-B"/>
</dbReference>
<dbReference type="InterPro" id="IPR033178">
    <property type="entry name" value="PSD_type1_pro"/>
</dbReference>
<dbReference type="NCBIfam" id="TIGR00163">
    <property type="entry name" value="PS_decarb"/>
    <property type="match status" value="1"/>
</dbReference>
<dbReference type="PANTHER" id="PTHR10067">
    <property type="entry name" value="PHOSPHATIDYLSERINE DECARBOXYLASE"/>
    <property type="match status" value="1"/>
</dbReference>
<dbReference type="PANTHER" id="PTHR10067:SF6">
    <property type="entry name" value="PHOSPHATIDYLSERINE DECARBOXYLASE PROENZYME, MITOCHONDRIAL"/>
    <property type="match status" value="1"/>
</dbReference>
<dbReference type="Pfam" id="PF02666">
    <property type="entry name" value="PS_Dcarbxylase"/>
    <property type="match status" value="1"/>
</dbReference>
<comment type="function">
    <text evidence="1">Catalyzes the formation of phosphatidylethanolamine (PtdEtn) from phosphatidylserine (PtdSer).</text>
</comment>
<comment type="catalytic activity">
    <reaction evidence="1">
        <text>a 1,2-diacyl-sn-glycero-3-phospho-L-serine + H(+) = a 1,2-diacyl-sn-glycero-3-phosphoethanolamine + CO2</text>
        <dbReference type="Rhea" id="RHEA:20828"/>
        <dbReference type="ChEBI" id="CHEBI:15378"/>
        <dbReference type="ChEBI" id="CHEBI:16526"/>
        <dbReference type="ChEBI" id="CHEBI:57262"/>
        <dbReference type="ChEBI" id="CHEBI:64612"/>
        <dbReference type="EC" id="4.1.1.65"/>
    </reaction>
</comment>
<comment type="cofactor">
    <cofactor evidence="1">
        <name>pyruvate</name>
        <dbReference type="ChEBI" id="CHEBI:15361"/>
    </cofactor>
    <text evidence="1">Binds 1 pyruvoyl group covalently per subunit.</text>
</comment>
<comment type="pathway">
    <text evidence="1">Phospholipid metabolism; phosphatidylethanolamine biosynthesis; phosphatidylethanolamine from CDP-diacylglycerol: step 2/2.</text>
</comment>
<comment type="subunit">
    <text evidence="1">Heterodimer of a large membrane-associated beta subunit and a small pyruvoyl-containing alpha subunit.</text>
</comment>
<comment type="subcellular location">
    <subcellularLocation>
        <location evidence="1">Cell membrane</location>
        <topology evidence="1">Peripheral membrane protein</topology>
    </subcellularLocation>
</comment>
<comment type="PTM">
    <text evidence="1">Is synthesized initially as an inactive proenzyme. Formation of the active enzyme involves a self-maturation process in which the active site pyruvoyl group is generated from an internal serine residue via an autocatalytic post-translational modification. Two non-identical subunits are generated from the proenzyme in this reaction, and the pyruvate is formed at the N-terminus of the alpha chain, which is derived from the carboxyl end of the proenzyme. The autoendoproteolytic cleavage occurs by a canonical serine protease mechanism, in which the side chain hydroxyl group of the serine supplies its oxygen atom to form the C-terminus of the beta chain, while the remainder of the serine residue undergoes an oxidative deamination to produce ammonia and the pyruvoyl prosthetic group on the alpha chain. During this reaction, the Ser that is part of the protease active site of the proenzyme becomes the pyruvoyl prosthetic group, which constitutes an essential element of the active site of the mature decarboxylase.</text>
</comment>
<comment type="similarity">
    <text evidence="1">Belongs to the phosphatidylserine decarboxylase family. PSD-B subfamily. Prokaryotic type I sub-subfamily.</text>
</comment>
<organism>
    <name type="scientific">Bordetella bronchiseptica (strain ATCC BAA-588 / NCTC 13252 / RB50)</name>
    <name type="common">Alcaligenes bronchisepticus</name>
    <dbReference type="NCBI Taxonomy" id="257310"/>
    <lineage>
        <taxon>Bacteria</taxon>
        <taxon>Pseudomonadati</taxon>
        <taxon>Pseudomonadota</taxon>
        <taxon>Betaproteobacteria</taxon>
        <taxon>Burkholderiales</taxon>
        <taxon>Alcaligenaceae</taxon>
        <taxon>Bordetella</taxon>
    </lineage>
</organism>
<keyword id="KW-1003">Cell membrane</keyword>
<keyword id="KW-0210">Decarboxylase</keyword>
<keyword id="KW-0444">Lipid biosynthesis</keyword>
<keyword id="KW-0443">Lipid metabolism</keyword>
<keyword id="KW-0456">Lyase</keyword>
<keyword id="KW-0472">Membrane</keyword>
<keyword id="KW-0594">Phospholipid biosynthesis</keyword>
<keyword id="KW-1208">Phospholipid metabolism</keyword>
<keyword id="KW-0670">Pyruvate</keyword>
<keyword id="KW-0865">Zymogen</keyword>
<accession>Q7WIF7</accession>
<name>PSD_BORBR</name>
<protein>
    <recommendedName>
        <fullName evidence="1">Phosphatidylserine decarboxylase proenzyme</fullName>
        <ecNumber evidence="1">4.1.1.65</ecNumber>
    </recommendedName>
    <component>
        <recommendedName>
            <fullName evidence="1">Phosphatidylserine decarboxylase alpha chain</fullName>
        </recommendedName>
    </component>
    <component>
        <recommendedName>
            <fullName evidence="1">Phosphatidylserine decarboxylase beta chain</fullName>
        </recommendedName>
    </component>
</protein>
<proteinExistence type="inferred from homology"/>
<feature type="chain" id="PRO_0000029633" description="Phosphatidylserine decarboxylase beta chain" evidence="1">
    <location>
        <begin position="1"/>
        <end position="253"/>
    </location>
</feature>
<feature type="chain" id="PRO_0000029634" description="Phosphatidylserine decarboxylase alpha chain" evidence="1">
    <location>
        <begin position="254"/>
        <end position="297"/>
    </location>
</feature>
<feature type="active site" description="Charge relay system; for autoendoproteolytic cleavage activity" evidence="1">
    <location>
        <position position="92"/>
    </location>
</feature>
<feature type="active site" description="Charge relay system; for autoendoproteolytic cleavage activity" evidence="1">
    <location>
        <position position="149"/>
    </location>
</feature>
<feature type="active site" description="Charge relay system; for autoendoproteolytic cleavage activity" evidence="1">
    <location>
        <position position="254"/>
    </location>
</feature>
<feature type="active site" description="Schiff-base intermediate with substrate; via pyruvic acid; for decarboxylase activity" evidence="1">
    <location>
        <position position="254"/>
    </location>
</feature>
<feature type="site" description="Cleavage (non-hydrolytic); by autocatalysis" evidence="1">
    <location>
        <begin position="253"/>
        <end position="254"/>
    </location>
</feature>
<feature type="modified residue" description="Pyruvic acid (Ser); by autocatalysis" evidence="1">
    <location>
        <position position="254"/>
    </location>
</feature>
<reference key="1">
    <citation type="journal article" date="2003" name="Nat. Genet.">
        <title>Comparative analysis of the genome sequences of Bordetella pertussis, Bordetella parapertussis and Bordetella bronchiseptica.</title>
        <authorList>
            <person name="Parkhill J."/>
            <person name="Sebaihia M."/>
            <person name="Preston A."/>
            <person name="Murphy L.D."/>
            <person name="Thomson N.R."/>
            <person name="Harris D.E."/>
            <person name="Holden M.T.G."/>
            <person name="Churcher C.M."/>
            <person name="Bentley S.D."/>
            <person name="Mungall K.L."/>
            <person name="Cerdeno-Tarraga A.-M."/>
            <person name="Temple L."/>
            <person name="James K.D."/>
            <person name="Harris B."/>
            <person name="Quail M.A."/>
            <person name="Achtman M."/>
            <person name="Atkin R."/>
            <person name="Baker S."/>
            <person name="Basham D."/>
            <person name="Bason N."/>
            <person name="Cherevach I."/>
            <person name="Chillingworth T."/>
            <person name="Collins M."/>
            <person name="Cronin A."/>
            <person name="Davis P."/>
            <person name="Doggett J."/>
            <person name="Feltwell T."/>
            <person name="Goble A."/>
            <person name="Hamlin N."/>
            <person name="Hauser H."/>
            <person name="Holroyd S."/>
            <person name="Jagels K."/>
            <person name="Leather S."/>
            <person name="Moule S."/>
            <person name="Norberczak H."/>
            <person name="O'Neil S."/>
            <person name="Ormond D."/>
            <person name="Price C."/>
            <person name="Rabbinowitsch E."/>
            <person name="Rutter S."/>
            <person name="Sanders M."/>
            <person name="Saunders D."/>
            <person name="Seeger K."/>
            <person name="Sharp S."/>
            <person name="Simmonds M."/>
            <person name="Skelton J."/>
            <person name="Squares R."/>
            <person name="Squares S."/>
            <person name="Stevens K."/>
            <person name="Unwin L."/>
            <person name="Whitehead S."/>
            <person name="Barrell B.G."/>
            <person name="Maskell D.J."/>
        </authorList>
    </citation>
    <scope>NUCLEOTIDE SEQUENCE [LARGE SCALE GENOMIC DNA]</scope>
    <source>
        <strain>ATCC BAA-588 / NCTC 13252 / RB50</strain>
    </source>
</reference>
<evidence type="ECO:0000255" key="1">
    <source>
        <dbReference type="HAMAP-Rule" id="MF_00662"/>
    </source>
</evidence>
<sequence>MPFKDQLFLASQYLAPHHLVSRLMGRAADCRAPEIKNRMIARFVRRYNVDMSEALVEDPLAYASFNDFFTRALKPDARPLDDEPGAALCPADGAISQIGAIDNGRIFQAKGHSFGLTDLLGGDAERAAPFAGGQFATIYLSPRDYHRVHMPLAGTLREMVHVPGRLFSVNPLTARSVPELFARNERVACLFDTEHGPMALVLVGAMIVASIETVWAGLVTPHKRQVRSVRYDAAARAPIHLDKGAEMGRFKLGSTVIVLFGPKRLRWLDLPSVRGPVRMGETLALPASTAISFPESE</sequence>
<gene>
    <name evidence="1" type="primary">psd</name>
    <name type="ordered locus">BB2894</name>
</gene>